<organism>
    <name type="scientific">Escherichia coli O45:K1 (strain S88 / ExPEC)</name>
    <dbReference type="NCBI Taxonomy" id="585035"/>
    <lineage>
        <taxon>Bacteria</taxon>
        <taxon>Pseudomonadati</taxon>
        <taxon>Pseudomonadota</taxon>
        <taxon>Gammaproteobacteria</taxon>
        <taxon>Enterobacterales</taxon>
        <taxon>Enterobacteriaceae</taxon>
        <taxon>Escherichia</taxon>
    </lineage>
</organism>
<keyword id="KW-0028">Amino-acid biosynthesis</keyword>
<keyword id="KW-0057">Aromatic amino acid biosynthesis</keyword>
<keyword id="KW-0456">Lyase</keyword>
<keyword id="KW-1185">Reference proteome</keyword>
<keyword id="KW-0704">Schiff base</keyword>
<protein>
    <recommendedName>
        <fullName evidence="1">3-dehydroquinate dehydratase</fullName>
        <shortName evidence="1">3-dehydroquinase</shortName>
        <ecNumber evidence="1">4.2.1.10</ecNumber>
    </recommendedName>
    <alternativeName>
        <fullName evidence="1">Type I DHQase</fullName>
    </alternativeName>
    <alternativeName>
        <fullName evidence="1">Type I dehydroquinase</fullName>
        <shortName evidence="1">DHQ1</shortName>
    </alternativeName>
</protein>
<feature type="chain" id="PRO_1000189570" description="3-dehydroquinate dehydratase">
    <location>
        <begin position="1"/>
        <end position="252"/>
    </location>
</feature>
<feature type="active site" description="Proton donor/acceptor" evidence="1">
    <location>
        <position position="143"/>
    </location>
</feature>
<feature type="active site" description="Schiff-base intermediate with substrate" evidence="1">
    <location>
        <position position="170"/>
    </location>
</feature>
<feature type="binding site" evidence="1">
    <location>
        <position position="21"/>
    </location>
    <ligand>
        <name>3-dehydroquinate</name>
        <dbReference type="ChEBI" id="CHEBI:32364"/>
    </ligand>
</feature>
<feature type="binding site" evidence="1">
    <location>
        <begin position="46"/>
        <end position="48"/>
    </location>
    <ligand>
        <name>3-dehydroquinate</name>
        <dbReference type="ChEBI" id="CHEBI:32364"/>
    </ligand>
</feature>
<feature type="binding site" evidence="1">
    <location>
        <position position="82"/>
    </location>
    <ligand>
        <name>3-dehydroquinate</name>
        <dbReference type="ChEBI" id="CHEBI:32364"/>
    </ligand>
</feature>
<feature type="binding site" evidence="1">
    <location>
        <position position="213"/>
    </location>
    <ligand>
        <name>3-dehydroquinate</name>
        <dbReference type="ChEBI" id="CHEBI:32364"/>
    </ligand>
</feature>
<feature type="binding site" evidence="1">
    <location>
        <position position="232"/>
    </location>
    <ligand>
        <name>3-dehydroquinate</name>
        <dbReference type="ChEBI" id="CHEBI:32364"/>
    </ligand>
</feature>
<feature type="binding site" evidence="1">
    <location>
        <position position="236"/>
    </location>
    <ligand>
        <name>3-dehydroquinate</name>
        <dbReference type="ChEBI" id="CHEBI:32364"/>
    </ligand>
</feature>
<accession>B7MAQ3</accession>
<comment type="function">
    <text evidence="1">Involved in the third step of the chorismate pathway, which leads to the biosynthesis of aromatic amino acids. Catalyzes the cis-dehydration of 3-dehydroquinate (DHQ) and introduces the first double bond of the aromatic ring to yield 3-dehydroshikimate.</text>
</comment>
<comment type="catalytic activity">
    <reaction evidence="1">
        <text>3-dehydroquinate = 3-dehydroshikimate + H2O</text>
        <dbReference type="Rhea" id="RHEA:21096"/>
        <dbReference type="ChEBI" id="CHEBI:15377"/>
        <dbReference type="ChEBI" id="CHEBI:16630"/>
        <dbReference type="ChEBI" id="CHEBI:32364"/>
        <dbReference type="EC" id="4.2.1.10"/>
    </reaction>
</comment>
<comment type="pathway">
    <text evidence="1">Metabolic intermediate biosynthesis; chorismate biosynthesis; chorismate from D-erythrose 4-phosphate and phosphoenolpyruvate: step 3/7.</text>
</comment>
<comment type="subunit">
    <text evidence="1">Homodimer.</text>
</comment>
<comment type="similarity">
    <text evidence="1">Belongs to the type-I 3-dehydroquinase family.</text>
</comment>
<reference key="1">
    <citation type="journal article" date="2009" name="PLoS Genet.">
        <title>Organised genome dynamics in the Escherichia coli species results in highly diverse adaptive paths.</title>
        <authorList>
            <person name="Touchon M."/>
            <person name="Hoede C."/>
            <person name="Tenaillon O."/>
            <person name="Barbe V."/>
            <person name="Baeriswyl S."/>
            <person name="Bidet P."/>
            <person name="Bingen E."/>
            <person name="Bonacorsi S."/>
            <person name="Bouchier C."/>
            <person name="Bouvet O."/>
            <person name="Calteau A."/>
            <person name="Chiapello H."/>
            <person name="Clermont O."/>
            <person name="Cruveiller S."/>
            <person name="Danchin A."/>
            <person name="Diard M."/>
            <person name="Dossat C."/>
            <person name="Karoui M.E."/>
            <person name="Frapy E."/>
            <person name="Garry L."/>
            <person name="Ghigo J.M."/>
            <person name="Gilles A.M."/>
            <person name="Johnson J."/>
            <person name="Le Bouguenec C."/>
            <person name="Lescat M."/>
            <person name="Mangenot S."/>
            <person name="Martinez-Jehanne V."/>
            <person name="Matic I."/>
            <person name="Nassif X."/>
            <person name="Oztas S."/>
            <person name="Petit M.A."/>
            <person name="Pichon C."/>
            <person name="Rouy Z."/>
            <person name="Ruf C.S."/>
            <person name="Schneider D."/>
            <person name="Tourret J."/>
            <person name="Vacherie B."/>
            <person name="Vallenet D."/>
            <person name="Medigue C."/>
            <person name="Rocha E.P.C."/>
            <person name="Denamur E."/>
        </authorList>
    </citation>
    <scope>NUCLEOTIDE SEQUENCE [LARGE SCALE GENOMIC DNA]</scope>
    <source>
        <strain>S88 / ExPEC</strain>
    </source>
</reference>
<name>AROD_ECO45</name>
<evidence type="ECO:0000255" key="1">
    <source>
        <dbReference type="HAMAP-Rule" id="MF_00214"/>
    </source>
</evidence>
<dbReference type="EC" id="4.2.1.10" evidence="1"/>
<dbReference type="EMBL" id="CU928161">
    <property type="protein sequence ID" value="CAR03052.1"/>
    <property type="molecule type" value="Genomic_DNA"/>
</dbReference>
<dbReference type="RefSeq" id="WP_000860194.1">
    <property type="nucleotide sequence ID" value="NC_011742.1"/>
</dbReference>
<dbReference type="SMR" id="B7MAQ3"/>
<dbReference type="KEGG" id="ecz:ECS88_1743"/>
<dbReference type="HOGENOM" id="CLU_064444_0_0_6"/>
<dbReference type="UniPathway" id="UPA00053">
    <property type="reaction ID" value="UER00086"/>
</dbReference>
<dbReference type="Proteomes" id="UP000000747">
    <property type="component" value="Chromosome"/>
</dbReference>
<dbReference type="GO" id="GO:0003855">
    <property type="term" value="F:3-dehydroquinate dehydratase activity"/>
    <property type="evidence" value="ECO:0007669"/>
    <property type="project" value="UniProtKB-UniRule"/>
</dbReference>
<dbReference type="GO" id="GO:0046279">
    <property type="term" value="P:3,4-dihydroxybenzoate biosynthetic process"/>
    <property type="evidence" value="ECO:0007669"/>
    <property type="project" value="TreeGrafter"/>
</dbReference>
<dbReference type="GO" id="GO:0008652">
    <property type="term" value="P:amino acid biosynthetic process"/>
    <property type="evidence" value="ECO:0007669"/>
    <property type="project" value="UniProtKB-KW"/>
</dbReference>
<dbReference type="GO" id="GO:0009073">
    <property type="term" value="P:aromatic amino acid family biosynthetic process"/>
    <property type="evidence" value="ECO:0007669"/>
    <property type="project" value="UniProtKB-KW"/>
</dbReference>
<dbReference type="GO" id="GO:0009423">
    <property type="term" value="P:chorismate biosynthetic process"/>
    <property type="evidence" value="ECO:0007669"/>
    <property type="project" value="UniProtKB-UniRule"/>
</dbReference>
<dbReference type="CDD" id="cd00502">
    <property type="entry name" value="DHQase_I"/>
    <property type="match status" value="1"/>
</dbReference>
<dbReference type="FunFam" id="3.20.20.70:FF:000047">
    <property type="entry name" value="3-dehydroquinate dehydratase"/>
    <property type="match status" value="1"/>
</dbReference>
<dbReference type="Gene3D" id="3.20.20.70">
    <property type="entry name" value="Aldolase class I"/>
    <property type="match status" value="1"/>
</dbReference>
<dbReference type="HAMAP" id="MF_00214">
    <property type="entry name" value="AroD"/>
    <property type="match status" value="1"/>
</dbReference>
<dbReference type="InterPro" id="IPR018508">
    <property type="entry name" value="3-dehydroquinate_DH_AS"/>
</dbReference>
<dbReference type="InterPro" id="IPR013785">
    <property type="entry name" value="Aldolase_TIM"/>
</dbReference>
<dbReference type="InterPro" id="IPR001381">
    <property type="entry name" value="DHquinase_I"/>
</dbReference>
<dbReference type="InterPro" id="IPR050146">
    <property type="entry name" value="Type-I_3-dehydroquinase"/>
</dbReference>
<dbReference type="NCBIfam" id="TIGR01093">
    <property type="entry name" value="aroD"/>
    <property type="match status" value="1"/>
</dbReference>
<dbReference type="PANTHER" id="PTHR43699">
    <property type="entry name" value="3-DEHYDROQUINATE DEHYDRATASE"/>
    <property type="match status" value="1"/>
</dbReference>
<dbReference type="PANTHER" id="PTHR43699:SF1">
    <property type="entry name" value="3-DEHYDROQUINATE DEHYDRATASE"/>
    <property type="match status" value="1"/>
</dbReference>
<dbReference type="Pfam" id="PF01487">
    <property type="entry name" value="DHquinase_I"/>
    <property type="match status" value="1"/>
</dbReference>
<dbReference type="SUPFAM" id="SSF51569">
    <property type="entry name" value="Aldolase"/>
    <property type="match status" value="1"/>
</dbReference>
<dbReference type="PROSITE" id="PS01028">
    <property type="entry name" value="DEHYDROQUINASE_I"/>
    <property type="match status" value="1"/>
</dbReference>
<proteinExistence type="inferred from homology"/>
<sequence>MKTVTVKDLVIGTGAPKIIVSLMAKDIASVKSEALAYREADFDILEWRVDHYADLSNVESVIAAAKILRETMPEKPLLFTFRSAKEGGEQAISTEAYIALNRAAIDSGLVDMIDLELFTGDDQVKETVAYAHAHDVKVVMSNHDFHKTPEAEEIIARLRKMQSFDADIPKIALMPQSTSDVLTLLAATLEMQEQYADRPIITMSMAKTGVISRLAGEVFGSAATFGAVKKASAPGQISVNDLRTVLTILHQA</sequence>
<gene>
    <name evidence="1" type="primary">aroD</name>
    <name type="ordered locus">ECS88_1743</name>
</gene>